<evidence type="ECO:0000250" key="1">
    <source>
        <dbReference type="UniProtKB" id="I6Y9Q3"/>
    </source>
</evidence>
<evidence type="ECO:0000250" key="2">
    <source>
        <dbReference type="UniProtKB" id="O34002"/>
    </source>
</evidence>
<evidence type="ECO:0000250" key="3">
    <source>
        <dbReference type="UniProtKB" id="P31660"/>
    </source>
</evidence>
<evidence type="ECO:0000269" key="4">
    <source>
    </source>
</evidence>
<evidence type="ECO:0000303" key="5">
    <source>
    </source>
</evidence>
<evidence type="ECO:0000305" key="6"/>
<evidence type="ECO:0000305" key="7">
    <source>
    </source>
</evidence>
<reference key="1">
    <citation type="journal article" date="2002" name="J. Bacteriol.">
        <title>Identification of two prpDBC gene clusters in Corynebacterium glutamicum and their involvement in propionate degradation via the 2-methylcitrate cycle.</title>
        <authorList>
            <person name="Claes W.A."/>
            <person name="Puehler A."/>
            <person name="Kalinowski J."/>
        </authorList>
    </citation>
    <scope>NUCLEOTIDE SEQUENCE [GENOMIC DNA]</scope>
    <scope>FUNCTION</scope>
    <scope>CATALYTIC ACTIVITY</scope>
    <scope>SUBSTRATE SPECIFICITY</scope>
    <scope>INDUCTION</scope>
    <source>
        <strain>ATCC 13032 / DSM 20300 / JCM 1318 / BCRC 11384 / CCUG 27702 / LMG 3730 / NBRC 12168 / NCIMB 10025 / NRRL B-2784 / 534</strain>
    </source>
</reference>
<reference key="2">
    <citation type="journal article" date="2003" name="Appl. Microbiol. Biotechnol.">
        <title>The Corynebacterium glutamicum genome: features and impacts on biotechnological processes.</title>
        <authorList>
            <person name="Ikeda M."/>
            <person name="Nakagawa S."/>
        </authorList>
    </citation>
    <scope>NUCLEOTIDE SEQUENCE [LARGE SCALE GENOMIC DNA]</scope>
    <source>
        <strain>ATCC 13032 / DSM 20300 / JCM 1318 / BCRC 11384 / CCUG 27702 / LMG 3730 / NBRC 12168 / NCIMB 10025 / NRRL B-2784 / 534</strain>
    </source>
</reference>
<reference key="3">
    <citation type="journal article" date="2003" name="J. Biotechnol.">
        <title>The complete Corynebacterium glutamicum ATCC 13032 genome sequence and its impact on the production of L-aspartate-derived amino acids and vitamins.</title>
        <authorList>
            <person name="Kalinowski J."/>
            <person name="Bathe B."/>
            <person name="Bartels D."/>
            <person name="Bischoff N."/>
            <person name="Bott M."/>
            <person name="Burkovski A."/>
            <person name="Dusch N."/>
            <person name="Eggeling L."/>
            <person name="Eikmanns B.J."/>
            <person name="Gaigalat L."/>
            <person name="Goesmann A."/>
            <person name="Hartmann M."/>
            <person name="Huthmacher K."/>
            <person name="Kraemer R."/>
            <person name="Linke B."/>
            <person name="McHardy A.C."/>
            <person name="Meyer F."/>
            <person name="Moeckel B."/>
            <person name="Pfefferle W."/>
            <person name="Puehler A."/>
            <person name="Rey D.A."/>
            <person name="Rueckert C."/>
            <person name="Rupp O."/>
            <person name="Sahm H."/>
            <person name="Wendisch V.F."/>
            <person name="Wiegraebe I."/>
            <person name="Tauch A."/>
        </authorList>
    </citation>
    <scope>NUCLEOTIDE SEQUENCE [LARGE SCALE GENOMIC DNA]</scope>
    <source>
        <strain>ATCC 13032 / DSM 20300 / JCM 1318 / BCRC 11384 / CCUG 27702 / LMG 3730 / NBRC 12168 / NCIMB 10025 / NRRL B-2784 / 534</strain>
    </source>
</reference>
<keyword id="KW-1185">Reference proteome</keyword>
<keyword id="KW-0808">Transferase</keyword>
<keyword id="KW-0816">Tricarboxylic acid cycle</keyword>
<name>PRPC2_CORGL</name>
<proteinExistence type="evidence at protein level"/>
<dbReference type="EC" id="2.3.3.5" evidence="4"/>
<dbReference type="EC" id="2.3.3.16" evidence="4"/>
<dbReference type="EMBL" id="AF434799">
    <property type="protein sequence ID" value="AAM21506.1"/>
    <property type="molecule type" value="Genomic_DNA"/>
</dbReference>
<dbReference type="EMBL" id="BA000036">
    <property type="protein sequence ID" value="BAB98052.1"/>
    <property type="molecule type" value="Genomic_DNA"/>
</dbReference>
<dbReference type="EMBL" id="BX927149">
    <property type="protein sequence ID" value="CAF19365.1"/>
    <property type="molecule type" value="Genomic_DNA"/>
</dbReference>
<dbReference type="RefSeq" id="NP_599891.1">
    <property type="nucleotide sequence ID" value="NC_003450.3"/>
</dbReference>
<dbReference type="RefSeq" id="WP_011013797.1">
    <property type="nucleotide sequence ID" value="NC_006958.1"/>
</dbReference>
<dbReference type="SMR" id="Q8NSL1"/>
<dbReference type="STRING" id="196627.cg0762"/>
<dbReference type="KEGG" id="cgb:cg0762"/>
<dbReference type="KEGG" id="cgl:Cgl0659"/>
<dbReference type="PATRIC" id="fig|196627.13.peg.645"/>
<dbReference type="eggNOG" id="COG0372">
    <property type="taxonomic scope" value="Bacteria"/>
</dbReference>
<dbReference type="HOGENOM" id="CLU_025068_2_1_11"/>
<dbReference type="OrthoDB" id="9800864at2"/>
<dbReference type="BioCyc" id="CORYNE:G18NG-10221-MONOMER"/>
<dbReference type="BRENDA" id="2.3.3.5">
    <property type="organism ID" value="960"/>
</dbReference>
<dbReference type="UniPathway" id="UPA00223">
    <property type="reaction ID" value="UER00717"/>
</dbReference>
<dbReference type="UniPathway" id="UPA00946"/>
<dbReference type="Proteomes" id="UP000000582">
    <property type="component" value="Chromosome"/>
</dbReference>
<dbReference type="Proteomes" id="UP000001009">
    <property type="component" value="Chromosome"/>
</dbReference>
<dbReference type="GO" id="GO:0005829">
    <property type="term" value="C:cytosol"/>
    <property type="evidence" value="ECO:0007669"/>
    <property type="project" value="TreeGrafter"/>
</dbReference>
<dbReference type="GO" id="GO:0050440">
    <property type="term" value="F:2-methylcitrate synthase activity"/>
    <property type="evidence" value="ECO:0000314"/>
    <property type="project" value="UniProtKB"/>
</dbReference>
<dbReference type="GO" id="GO:0004108">
    <property type="term" value="F:citrate (Si)-synthase activity"/>
    <property type="evidence" value="ECO:0007669"/>
    <property type="project" value="TreeGrafter"/>
</dbReference>
<dbReference type="GO" id="GO:0036440">
    <property type="term" value="F:citrate synthase activity"/>
    <property type="evidence" value="ECO:0000314"/>
    <property type="project" value="UniProtKB"/>
</dbReference>
<dbReference type="GO" id="GO:0005975">
    <property type="term" value="P:carbohydrate metabolic process"/>
    <property type="evidence" value="ECO:0007669"/>
    <property type="project" value="TreeGrafter"/>
</dbReference>
<dbReference type="GO" id="GO:0019679">
    <property type="term" value="P:propionate metabolic process, methylcitrate cycle"/>
    <property type="evidence" value="ECO:0000314"/>
    <property type="project" value="UniProtKB"/>
</dbReference>
<dbReference type="GO" id="GO:0006099">
    <property type="term" value="P:tricarboxylic acid cycle"/>
    <property type="evidence" value="ECO:0007669"/>
    <property type="project" value="UniProtKB-UniPathway"/>
</dbReference>
<dbReference type="CDD" id="cd06111">
    <property type="entry name" value="DsCS_like"/>
    <property type="match status" value="1"/>
</dbReference>
<dbReference type="Gene3D" id="1.10.580.10">
    <property type="entry name" value="Citrate Synthase, domain 1"/>
    <property type="match status" value="1"/>
</dbReference>
<dbReference type="Gene3D" id="1.10.230.10">
    <property type="entry name" value="Cytochrome P450-Terp, domain 2"/>
    <property type="match status" value="1"/>
</dbReference>
<dbReference type="InterPro" id="IPR011278">
    <property type="entry name" value="2-MeCitrate/Citrate_synth_II"/>
</dbReference>
<dbReference type="InterPro" id="IPR016142">
    <property type="entry name" value="Citrate_synth-like_lrg_a-sub"/>
</dbReference>
<dbReference type="InterPro" id="IPR016143">
    <property type="entry name" value="Citrate_synth-like_sm_a-sub"/>
</dbReference>
<dbReference type="InterPro" id="IPR002020">
    <property type="entry name" value="Citrate_synthase"/>
</dbReference>
<dbReference type="InterPro" id="IPR019810">
    <property type="entry name" value="Citrate_synthase_AS"/>
</dbReference>
<dbReference type="InterPro" id="IPR024176">
    <property type="entry name" value="Citrate_synthase_bac-typ"/>
</dbReference>
<dbReference type="InterPro" id="IPR036969">
    <property type="entry name" value="Citrate_synthase_sf"/>
</dbReference>
<dbReference type="NCBIfam" id="TIGR01800">
    <property type="entry name" value="cit_synth_II"/>
    <property type="match status" value="1"/>
</dbReference>
<dbReference type="NCBIfam" id="NF010636">
    <property type="entry name" value="PRK14033.1"/>
    <property type="match status" value="1"/>
</dbReference>
<dbReference type="PANTHER" id="PTHR11739">
    <property type="entry name" value="CITRATE SYNTHASE"/>
    <property type="match status" value="1"/>
</dbReference>
<dbReference type="PANTHER" id="PTHR11739:SF4">
    <property type="entry name" value="CITRATE SYNTHASE, PEROXISOMAL"/>
    <property type="match status" value="1"/>
</dbReference>
<dbReference type="Pfam" id="PF00285">
    <property type="entry name" value="Citrate_synt"/>
    <property type="match status" value="1"/>
</dbReference>
<dbReference type="PIRSF" id="PIRSF001369">
    <property type="entry name" value="Citrate_synth"/>
    <property type="match status" value="1"/>
</dbReference>
<dbReference type="PRINTS" id="PR00143">
    <property type="entry name" value="CITRTSNTHASE"/>
</dbReference>
<dbReference type="SUPFAM" id="SSF48256">
    <property type="entry name" value="Citrate synthase"/>
    <property type="match status" value="1"/>
</dbReference>
<dbReference type="PROSITE" id="PS00480">
    <property type="entry name" value="CITRATE_SYNTHASE"/>
    <property type="match status" value="1"/>
</dbReference>
<comment type="function">
    <text evidence="4">Involved in the catabolism of short chain fatty acids (SCFA) via the tricarboxylic acid (TCA)(acetyl degradation route) and via the 2-methylcitrate cycle I (propionate degradation route). Catalyzes the Claisen condensation of propionyl-CoA and oxaloacetate (OAA) to yield 2-methylcitrate (2-MC) and CoA. Also catalyzes the condensation of oxaloacetate with acetyl-CoA but with a lower specificity.</text>
</comment>
<comment type="catalytic activity">
    <reaction evidence="4">
        <text>propanoyl-CoA + oxaloacetate + H2O = (2S,3S)-2-methylcitrate + CoA + H(+)</text>
        <dbReference type="Rhea" id="RHEA:23780"/>
        <dbReference type="ChEBI" id="CHEBI:15377"/>
        <dbReference type="ChEBI" id="CHEBI:15378"/>
        <dbReference type="ChEBI" id="CHEBI:16452"/>
        <dbReference type="ChEBI" id="CHEBI:57287"/>
        <dbReference type="ChEBI" id="CHEBI:57392"/>
        <dbReference type="ChEBI" id="CHEBI:58853"/>
        <dbReference type="EC" id="2.3.3.5"/>
    </reaction>
</comment>
<comment type="catalytic activity">
    <reaction evidence="4">
        <text>oxaloacetate + acetyl-CoA + H2O = citrate + CoA + H(+)</text>
        <dbReference type="Rhea" id="RHEA:16845"/>
        <dbReference type="ChEBI" id="CHEBI:15377"/>
        <dbReference type="ChEBI" id="CHEBI:15378"/>
        <dbReference type="ChEBI" id="CHEBI:16452"/>
        <dbReference type="ChEBI" id="CHEBI:16947"/>
        <dbReference type="ChEBI" id="CHEBI:57287"/>
        <dbReference type="ChEBI" id="CHEBI:57288"/>
        <dbReference type="EC" id="2.3.3.16"/>
    </reaction>
</comment>
<comment type="pathway">
    <text evidence="7">Organic acid metabolism; propanoate degradation.</text>
</comment>
<comment type="pathway">
    <text evidence="7">Carbohydrate metabolism; tricarboxylic acid cycle; isocitrate from oxaloacetate: step 1/2.</text>
</comment>
<comment type="subunit">
    <text evidence="3">Homodimer.</text>
</comment>
<comment type="induction">
    <text evidence="4">By propionate.</text>
</comment>
<comment type="miscellaneous">
    <text evidence="4">The prpD2B2C2 operon is essential for growth on propionate as sole carbon source.</text>
</comment>
<comment type="similarity">
    <text evidence="6">Belongs to the citrate synthase family.</text>
</comment>
<feature type="chain" id="PRO_0000169980" description="2-methylcitrate synthase 2">
    <location>
        <begin position="1"/>
        <end position="383"/>
    </location>
</feature>
<feature type="active site" evidence="2">
    <location>
        <position position="230"/>
    </location>
</feature>
<feature type="active site" evidence="2">
    <location>
        <position position="269"/>
    </location>
</feature>
<feature type="active site" evidence="2">
    <location>
        <position position="320"/>
    </location>
</feature>
<feature type="binding site" evidence="1">
    <location>
        <position position="73"/>
    </location>
    <ligand>
        <name>substrate</name>
    </ligand>
</feature>
<feature type="binding site" evidence="1">
    <location>
        <position position="195"/>
    </location>
    <ligand>
        <name>substrate</name>
    </ligand>
</feature>
<feature type="binding site" evidence="2">
    <location>
        <begin position="263"/>
        <end position="267"/>
    </location>
    <ligand>
        <name>CoA</name>
        <dbReference type="ChEBI" id="CHEBI:57287"/>
    </ligand>
</feature>
<feature type="binding site" evidence="1">
    <location>
        <position position="278"/>
    </location>
    <ligand>
        <name>substrate</name>
    </ligand>
</feature>
<feature type="binding site" evidence="1">
    <location>
        <position position="345"/>
    </location>
    <ligand>
        <name>substrate</name>
    </ligand>
</feature>
<feature type="binding site" evidence="1">
    <location>
        <position position="364"/>
    </location>
    <ligand>
        <name>substrate</name>
    </ligand>
</feature>
<sequence>MSSATTTDVRKGLYGVIADYTAVSKVMPETNSLTYRGYAVEDLVENCSFEEVFYLLWHGELPTAQQLAEFNERGRSYRSLDAGLISLIHSLPKEAHPMDVMRTAVSYMGTKDSEYFTTDSEHIRKVGHTLLAQLPMVLAMDIRRRKGLDIIAPDSSKSVAENLLSMVFGTGPESPASNPADVRDFEKSLILYAEHSFNASTFTARVITSTKSDVYSAITGAIGALKGPLHGGANEFVMHTMLAIDDPNKAAAWINNALDNKNVVMGFGHRVYKRGDSRVPSMEKSFRELAARHDGEKWVAMYENMRDAMDARTGIKPNLDFPAGPAYHLLGFPVDFFTPLFVIARVAGWTAHIVEQYENNSLIRPLSEYNGEEQREVAPIEKR</sequence>
<accession>Q8NSL1</accession>
<organism>
    <name type="scientific">Corynebacterium glutamicum (strain ATCC 13032 / DSM 20300 / JCM 1318 / BCRC 11384 / CCUG 27702 / LMG 3730 / NBRC 12168 / NCIMB 10025 / NRRL B-2784 / 534)</name>
    <dbReference type="NCBI Taxonomy" id="196627"/>
    <lineage>
        <taxon>Bacteria</taxon>
        <taxon>Bacillati</taxon>
        <taxon>Actinomycetota</taxon>
        <taxon>Actinomycetes</taxon>
        <taxon>Mycobacteriales</taxon>
        <taxon>Corynebacteriaceae</taxon>
        <taxon>Corynebacterium</taxon>
    </lineage>
</organism>
<protein>
    <recommendedName>
        <fullName evidence="5">2-methylcitrate synthase 2</fullName>
        <shortName evidence="5">2-MCS</shortName>
        <shortName evidence="5">MCS</shortName>
        <ecNumber evidence="4">2.3.3.5</ecNumber>
    </recommendedName>
    <alternativeName>
        <fullName evidence="5">Citrate synthase 2</fullName>
        <shortName evidence="5">CS</shortName>
        <ecNumber evidence="4">2.3.3.16</ecNumber>
    </alternativeName>
</protein>
<gene>
    <name type="primary">prpC2</name>
    <name type="ordered locus">Cgl0659</name>
    <name type="ordered locus">cg0762</name>
</gene>